<evidence type="ECO:0000255" key="1">
    <source>
        <dbReference type="HAMAP-Rule" id="MF_00005"/>
    </source>
</evidence>
<organism>
    <name type="scientific">Prosthecochloris aestuarii (strain DSM 271 / SK 413)</name>
    <dbReference type="NCBI Taxonomy" id="290512"/>
    <lineage>
        <taxon>Bacteria</taxon>
        <taxon>Pseudomonadati</taxon>
        <taxon>Chlorobiota</taxon>
        <taxon>Chlorobiia</taxon>
        <taxon>Chlorobiales</taxon>
        <taxon>Chlorobiaceae</taxon>
        <taxon>Prosthecochloris</taxon>
    </lineage>
</organism>
<protein>
    <recommendedName>
        <fullName evidence="1">Argininosuccinate synthase</fullName>
        <ecNumber evidence="1">6.3.4.5</ecNumber>
    </recommendedName>
    <alternativeName>
        <fullName evidence="1">Citrulline--aspartate ligase</fullName>
    </alternativeName>
</protein>
<name>ASSY_PROA2</name>
<comment type="catalytic activity">
    <reaction evidence="1">
        <text>L-citrulline + L-aspartate + ATP = 2-(N(omega)-L-arginino)succinate + AMP + diphosphate + H(+)</text>
        <dbReference type="Rhea" id="RHEA:10932"/>
        <dbReference type="ChEBI" id="CHEBI:15378"/>
        <dbReference type="ChEBI" id="CHEBI:29991"/>
        <dbReference type="ChEBI" id="CHEBI:30616"/>
        <dbReference type="ChEBI" id="CHEBI:33019"/>
        <dbReference type="ChEBI" id="CHEBI:57472"/>
        <dbReference type="ChEBI" id="CHEBI:57743"/>
        <dbReference type="ChEBI" id="CHEBI:456215"/>
        <dbReference type="EC" id="6.3.4.5"/>
    </reaction>
</comment>
<comment type="pathway">
    <text evidence="1">Amino-acid biosynthesis; L-arginine biosynthesis; L-arginine from L-ornithine and carbamoyl phosphate: step 2/3.</text>
</comment>
<comment type="subunit">
    <text evidence="1">Homotetramer.</text>
</comment>
<comment type="subcellular location">
    <subcellularLocation>
        <location evidence="1">Cytoplasm</location>
    </subcellularLocation>
</comment>
<comment type="similarity">
    <text evidence="1">Belongs to the argininosuccinate synthase family. Type 1 subfamily.</text>
</comment>
<reference key="1">
    <citation type="submission" date="2008-06" db="EMBL/GenBank/DDBJ databases">
        <title>Complete sequence of chromosome of Prosthecochloris aestuarii DSM 271.</title>
        <authorList>
            <consortium name="US DOE Joint Genome Institute"/>
            <person name="Lucas S."/>
            <person name="Copeland A."/>
            <person name="Lapidus A."/>
            <person name="Glavina del Rio T."/>
            <person name="Dalin E."/>
            <person name="Tice H."/>
            <person name="Bruce D."/>
            <person name="Goodwin L."/>
            <person name="Pitluck S."/>
            <person name="Schmutz J."/>
            <person name="Larimer F."/>
            <person name="Land M."/>
            <person name="Hauser L."/>
            <person name="Kyrpides N."/>
            <person name="Anderson I."/>
            <person name="Liu Z."/>
            <person name="Li T."/>
            <person name="Zhao F."/>
            <person name="Overmann J."/>
            <person name="Bryant D.A."/>
            <person name="Richardson P."/>
        </authorList>
    </citation>
    <scope>NUCLEOTIDE SEQUENCE [LARGE SCALE GENOMIC DNA]</scope>
    <source>
        <strain>DSM 271 / SK 413</strain>
    </source>
</reference>
<sequence>MSKEKIALAYSGGLDTSVMIKWLKDKYDAEIVAVTGNLGQEKEVENLEEKAIATGASSFAFLDLRKEFVESCIWPALKAGALYEDVYPLATALGRPLIAKALVDIALENNCTMLAHGCTGKGNDQVRFEVTFASLAPQLAVLAPLREWEFTSREAEIAYAMEHNIPVSATKKSPYSIDENIWGISIECGVLEDPMTPAPEDAYQITTSPEKAPDKAAVIDIEFEQGVPVALDGKAMEGLDLIVELNKVGAAHGVGRLDMVENRVVGIKSREIYEAPAATILHFAHRELERLTLEKSVFQYKKNVSQDYANLIYNGTWFSPMREALDGFIEATQKTVTGLVRVKLFKGSVTLLGRTSPWSLYNEDLATYTEADTFNHKAAEGFIHLYGLGLKTWSEVKANNS</sequence>
<proteinExistence type="inferred from homology"/>
<accession>B4S7R9</accession>
<keyword id="KW-0028">Amino-acid biosynthesis</keyword>
<keyword id="KW-0055">Arginine biosynthesis</keyword>
<keyword id="KW-0067">ATP-binding</keyword>
<keyword id="KW-0963">Cytoplasm</keyword>
<keyword id="KW-0436">Ligase</keyword>
<keyword id="KW-0547">Nucleotide-binding</keyword>
<feature type="chain" id="PRO_1000089049" description="Argininosuccinate synthase">
    <location>
        <begin position="1"/>
        <end position="401"/>
    </location>
</feature>
<feature type="binding site" evidence="1">
    <location>
        <begin position="9"/>
        <end position="17"/>
    </location>
    <ligand>
        <name>ATP</name>
        <dbReference type="ChEBI" id="CHEBI:30616"/>
    </ligand>
</feature>
<feature type="binding site" evidence="1">
    <location>
        <position position="87"/>
    </location>
    <ligand>
        <name>L-citrulline</name>
        <dbReference type="ChEBI" id="CHEBI:57743"/>
    </ligand>
</feature>
<feature type="binding site" evidence="1">
    <location>
        <position position="117"/>
    </location>
    <ligand>
        <name>ATP</name>
        <dbReference type="ChEBI" id="CHEBI:30616"/>
    </ligand>
</feature>
<feature type="binding site" evidence="1">
    <location>
        <position position="119"/>
    </location>
    <ligand>
        <name>L-aspartate</name>
        <dbReference type="ChEBI" id="CHEBI:29991"/>
    </ligand>
</feature>
<feature type="binding site" evidence="1">
    <location>
        <position position="123"/>
    </location>
    <ligand>
        <name>L-aspartate</name>
        <dbReference type="ChEBI" id="CHEBI:29991"/>
    </ligand>
</feature>
<feature type="binding site" evidence="1">
    <location>
        <position position="123"/>
    </location>
    <ligand>
        <name>L-citrulline</name>
        <dbReference type="ChEBI" id="CHEBI:57743"/>
    </ligand>
</feature>
<feature type="binding site" evidence="1">
    <location>
        <position position="124"/>
    </location>
    <ligand>
        <name>L-aspartate</name>
        <dbReference type="ChEBI" id="CHEBI:29991"/>
    </ligand>
</feature>
<feature type="binding site" evidence="1">
    <location>
        <position position="127"/>
    </location>
    <ligand>
        <name>L-citrulline</name>
        <dbReference type="ChEBI" id="CHEBI:57743"/>
    </ligand>
</feature>
<feature type="binding site" evidence="1">
    <location>
        <position position="176"/>
    </location>
    <ligand>
        <name>L-citrulline</name>
        <dbReference type="ChEBI" id="CHEBI:57743"/>
    </ligand>
</feature>
<feature type="binding site" evidence="1">
    <location>
        <position position="185"/>
    </location>
    <ligand>
        <name>L-citrulline</name>
        <dbReference type="ChEBI" id="CHEBI:57743"/>
    </ligand>
</feature>
<feature type="binding site" evidence="1">
    <location>
        <position position="261"/>
    </location>
    <ligand>
        <name>L-citrulline</name>
        <dbReference type="ChEBI" id="CHEBI:57743"/>
    </ligand>
</feature>
<feature type="binding site" evidence="1">
    <location>
        <position position="273"/>
    </location>
    <ligand>
        <name>L-citrulline</name>
        <dbReference type="ChEBI" id="CHEBI:57743"/>
    </ligand>
</feature>
<gene>
    <name evidence="1" type="primary">argG</name>
    <name type="ordered locus">Paes_1071</name>
</gene>
<dbReference type="EC" id="6.3.4.5" evidence="1"/>
<dbReference type="EMBL" id="CP001108">
    <property type="protein sequence ID" value="ACF46106.1"/>
    <property type="molecule type" value="Genomic_DNA"/>
</dbReference>
<dbReference type="RefSeq" id="WP_012505643.1">
    <property type="nucleotide sequence ID" value="NC_011059.1"/>
</dbReference>
<dbReference type="SMR" id="B4S7R9"/>
<dbReference type="STRING" id="290512.Paes_1071"/>
<dbReference type="KEGG" id="paa:Paes_1071"/>
<dbReference type="eggNOG" id="COG0137">
    <property type="taxonomic scope" value="Bacteria"/>
</dbReference>
<dbReference type="HOGENOM" id="CLU_032784_4_2_10"/>
<dbReference type="UniPathway" id="UPA00068">
    <property type="reaction ID" value="UER00113"/>
</dbReference>
<dbReference type="Proteomes" id="UP000002725">
    <property type="component" value="Chromosome"/>
</dbReference>
<dbReference type="GO" id="GO:0005737">
    <property type="term" value="C:cytoplasm"/>
    <property type="evidence" value="ECO:0007669"/>
    <property type="project" value="UniProtKB-SubCell"/>
</dbReference>
<dbReference type="GO" id="GO:0004055">
    <property type="term" value="F:argininosuccinate synthase activity"/>
    <property type="evidence" value="ECO:0007669"/>
    <property type="project" value="UniProtKB-UniRule"/>
</dbReference>
<dbReference type="GO" id="GO:0005524">
    <property type="term" value="F:ATP binding"/>
    <property type="evidence" value="ECO:0007669"/>
    <property type="project" value="UniProtKB-UniRule"/>
</dbReference>
<dbReference type="GO" id="GO:0000053">
    <property type="term" value="P:argininosuccinate metabolic process"/>
    <property type="evidence" value="ECO:0007669"/>
    <property type="project" value="TreeGrafter"/>
</dbReference>
<dbReference type="GO" id="GO:0006526">
    <property type="term" value="P:L-arginine biosynthetic process"/>
    <property type="evidence" value="ECO:0007669"/>
    <property type="project" value="UniProtKB-UniRule"/>
</dbReference>
<dbReference type="GO" id="GO:0000050">
    <property type="term" value="P:urea cycle"/>
    <property type="evidence" value="ECO:0007669"/>
    <property type="project" value="TreeGrafter"/>
</dbReference>
<dbReference type="CDD" id="cd01999">
    <property type="entry name" value="ASS"/>
    <property type="match status" value="1"/>
</dbReference>
<dbReference type="FunFam" id="3.40.50.620:FF:000019">
    <property type="entry name" value="Argininosuccinate synthase"/>
    <property type="match status" value="1"/>
</dbReference>
<dbReference type="FunFam" id="3.90.1260.10:FF:000007">
    <property type="entry name" value="Argininosuccinate synthase"/>
    <property type="match status" value="1"/>
</dbReference>
<dbReference type="Gene3D" id="3.90.1260.10">
    <property type="entry name" value="Argininosuccinate synthetase, chain A, domain 2"/>
    <property type="match status" value="1"/>
</dbReference>
<dbReference type="Gene3D" id="3.40.50.620">
    <property type="entry name" value="HUPs"/>
    <property type="match status" value="1"/>
</dbReference>
<dbReference type="Gene3D" id="1.20.5.470">
    <property type="entry name" value="Single helix bin"/>
    <property type="match status" value="1"/>
</dbReference>
<dbReference type="HAMAP" id="MF_00005">
    <property type="entry name" value="Arg_succ_synth_type1"/>
    <property type="match status" value="1"/>
</dbReference>
<dbReference type="InterPro" id="IPR048268">
    <property type="entry name" value="Arginosuc_syn_C"/>
</dbReference>
<dbReference type="InterPro" id="IPR048267">
    <property type="entry name" value="Arginosuc_syn_N"/>
</dbReference>
<dbReference type="InterPro" id="IPR001518">
    <property type="entry name" value="Arginosuc_synth"/>
</dbReference>
<dbReference type="InterPro" id="IPR018223">
    <property type="entry name" value="Arginosuc_synth_CS"/>
</dbReference>
<dbReference type="InterPro" id="IPR023434">
    <property type="entry name" value="Arginosuc_synth_type_1_subfam"/>
</dbReference>
<dbReference type="InterPro" id="IPR024074">
    <property type="entry name" value="AS_cat/multimer_dom_body"/>
</dbReference>
<dbReference type="InterPro" id="IPR014729">
    <property type="entry name" value="Rossmann-like_a/b/a_fold"/>
</dbReference>
<dbReference type="NCBIfam" id="TIGR00032">
    <property type="entry name" value="argG"/>
    <property type="match status" value="1"/>
</dbReference>
<dbReference type="NCBIfam" id="NF001770">
    <property type="entry name" value="PRK00509.1"/>
    <property type="match status" value="1"/>
</dbReference>
<dbReference type="PANTHER" id="PTHR11587">
    <property type="entry name" value="ARGININOSUCCINATE SYNTHASE"/>
    <property type="match status" value="1"/>
</dbReference>
<dbReference type="PANTHER" id="PTHR11587:SF2">
    <property type="entry name" value="ARGININOSUCCINATE SYNTHASE"/>
    <property type="match status" value="1"/>
</dbReference>
<dbReference type="Pfam" id="PF20979">
    <property type="entry name" value="Arginosuc_syn_C"/>
    <property type="match status" value="1"/>
</dbReference>
<dbReference type="Pfam" id="PF00764">
    <property type="entry name" value="Arginosuc_synth"/>
    <property type="match status" value="1"/>
</dbReference>
<dbReference type="SUPFAM" id="SSF52402">
    <property type="entry name" value="Adenine nucleotide alpha hydrolases-like"/>
    <property type="match status" value="1"/>
</dbReference>
<dbReference type="SUPFAM" id="SSF69864">
    <property type="entry name" value="Argininosuccinate synthetase, C-terminal domain"/>
    <property type="match status" value="1"/>
</dbReference>
<dbReference type="PROSITE" id="PS00564">
    <property type="entry name" value="ARGININOSUCCIN_SYN_1"/>
    <property type="match status" value="1"/>
</dbReference>
<dbReference type="PROSITE" id="PS00565">
    <property type="entry name" value="ARGININOSUCCIN_SYN_2"/>
    <property type="match status" value="1"/>
</dbReference>